<gene>
    <name evidence="1" type="primary">rpsS</name>
    <name type="ordered locus">Mrad2831_2222</name>
</gene>
<reference key="1">
    <citation type="submission" date="2008-03" db="EMBL/GenBank/DDBJ databases">
        <title>Complete sequence of chromosome of Methylobacterium radiotolerans JCM 2831.</title>
        <authorList>
            <consortium name="US DOE Joint Genome Institute"/>
            <person name="Copeland A."/>
            <person name="Lucas S."/>
            <person name="Lapidus A."/>
            <person name="Glavina del Rio T."/>
            <person name="Dalin E."/>
            <person name="Tice H."/>
            <person name="Bruce D."/>
            <person name="Goodwin L."/>
            <person name="Pitluck S."/>
            <person name="Kiss H."/>
            <person name="Brettin T."/>
            <person name="Detter J.C."/>
            <person name="Han C."/>
            <person name="Kuske C.R."/>
            <person name="Schmutz J."/>
            <person name="Larimer F."/>
            <person name="Land M."/>
            <person name="Hauser L."/>
            <person name="Kyrpides N."/>
            <person name="Mikhailova N."/>
            <person name="Marx C.J."/>
            <person name="Richardson P."/>
        </authorList>
    </citation>
    <scope>NUCLEOTIDE SEQUENCE [LARGE SCALE GENOMIC DNA]</scope>
    <source>
        <strain>ATCC 27329 / DSM 1819 / JCM 2831 / NBRC 15690 / NCIMB 10815 / 0-1</strain>
    </source>
</reference>
<evidence type="ECO:0000255" key="1">
    <source>
        <dbReference type="HAMAP-Rule" id="MF_00531"/>
    </source>
</evidence>
<evidence type="ECO:0000305" key="2"/>
<feature type="chain" id="PRO_1000128003" description="Small ribosomal subunit protein uS19">
    <location>
        <begin position="1"/>
        <end position="92"/>
    </location>
</feature>
<comment type="function">
    <text evidence="1">Protein S19 forms a complex with S13 that binds strongly to the 16S ribosomal RNA.</text>
</comment>
<comment type="similarity">
    <text evidence="1">Belongs to the universal ribosomal protein uS19 family.</text>
</comment>
<name>RS19_METRJ</name>
<sequence>MARSLWKGPFVDGYLFKKAEAARGSSRSEVIKIWSRRSTILPQFVGLTFGVHNGQKHIPVYVTEEMVGHKFGEFSPTRTFPGHAADKKAKRR</sequence>
<accession>B1LWT0</accession>
<proteinExistence type="inferred from homology"/>
<keyword id="KW-0687">Ribonucleoprotein</keyword>
<keyword id="KW-0689">Ribosomal protein</keyword>
<keyword id="KW-0694">RNA-binding</keyword>
<keyword id="KW-0699">rRNA-binding</keyword>
<dbReference type="EMBL" id="CP001001">
    <property type="protein sequence ID" value="ACB24217.1"/>
    <property type="molecule type" value="Genomic_DNA"/>
</dbReference>
<dbReference type="RefSeq" id="WP_012319190.1">
    <property type="nucleotide sequence ID" value="NC_010505.1"/>
</dbReference>
<dbReference type="SMR" id="B1LWT0"/>
<dbReference type="STRING" id="426355.Mrad2831_2222"/>
<dbReference type="GeneID" id="96606922"/>
<dbReference type="KEGG" id="mrd:Mrad2831_2222"/>
<dbReference type="eggNOG" id="COG0185">
    <property type="taxonomic scope" value="Bacteria"/>
</dbReference>
<dbReference type="HOGENOM" id="CLU_144911_0_1_5"/>
<dbReference type="OrthoDB" id="9797833at2"/>
<dbReference type="Proteomes" id="UP000006589">
    <property type="component" value="Chromosome"/>
</dbReference>
<dbReference type="GO" id="GO:0005737">
    <property type="term" value="C:cytoplasm"/>
    <property type="evidence" value="ECO:0007669"/>
    <property type="project" value="UniProtKB-ARBA"/>
</dbReference>
<dbReference type="GO" id="GO:0015935">
    <property type="term" value="C:small ribosomal subunit"/>
    <property type="evidence" value="ECO:0007669"/>
    <property type="project" value="InterPro"/>
</dbReference>
<dbReference type="GO" id="GO:0019843">
    <property type="term" value="F:rRNA binding"/>
    <property type="evidence" value="ECO:0007669"/>
    <property type="project" value="UniProtKB-UniRule"/>
</dbReference>
<dbReference type="GO" id="GO:0003735">
    <property type="term" value="F:structural constituent of ribosome"/>
    <property type="evidence" value="ECO:0007669"/>
    <property type="project" value="InterPro"/>
</dbReference>
<dbReference type="GO" id="GO:0000028">
    <property type="term" value="P:ribosomal small subunit assembly"/>
    <property type="evidence" value="ECO:0007669"/>
    <property type="project" value="TreeGrafter"/>
</dbReference>
<dbReference type="GO" id="GO:0006412">
    <property type="term" value="P:translation"/>
    <property type="evidence" value="ECO:0007669"/>
    <property type="project" value="UniProtKB-UniRule"/>
</dbReference>
<dbReference type="FunFam" id="3.30.860.10:FF:000001">
    <property type="entry name" value="30S ribosomal protein S19"/>
    <property type="match status" value="1"/>
</dbReference>
<dbReference type="Gene3D" id="3.30.860.10">
    <property type="entry name" value="30s Ribosomal Protein S19, Chain A"/>
    <property type="match status" value="1"/>
</dbReference>
<dbReference type="HAMAP" id="MF_00531">
    <property type="entry name" value="Ribosomal_uS19"/>
    <property type="match status" value="1"/>
</dbReference>
<dbReference type="InterPro" id="IPR002222">
    <property type="entry name" value="Ribosomal_uS19"/>
</dbReference>
<dbReference type="InterPro" id="IPR005732">
    <property type="entry name" value="Ribosomal_uS19_bac-type"/>
</dbReference>
<dbReference type="InterPro" id="IPR020934">
    <property type="entry name" value="Ribosomal_uS19_CS"/>
</dbReference>
<dbReference type="InterPro" id="IPR023575">
    <property type="entry name" value="Ribosomal_uS19_SF"/>
</dbReference>
<dbReference type="NCBIfam" id="TIGR01050">
    <property type="entry name" value="rpsS_bact"/>
    <property type="match status" value="1"/>
</dbReference>
<dbReference type="PANTHER" id="PTHR11880">
    <property type="entry name" value="RIBOSOMAL PROTEIN S19P FAMILY MEMBER"/>
    <property type="match status" value="1"/>
</dbReference>
<dbReference type="PANTHER" id="PTHR11880:SF8">
    <property type="entry name" value="SMALL RIBOSOMAL SUBUNIT PROTEIN US19M"/>
    <property type="match status" value="1"/>
</dbReference>
<dbReference type="Pfam" id="PF00203">
    <property type="entry name" value="Ribosomal_S19"/>
    <property type="match status" value="1"/>
</dbReference>
<dbReference type="PIRSF" id="PIRSF002144">
    <property type="entry name" value="Ribosomal_S19"/>
    <property type="match status" value="1"/>
</dbReference>
<dbReference type="PRINTS" id="PR00975">
    <property type="entry name" value="RIBOSOMALS19"/>
</dbReference>
<dbReference type="SUPFAM" id="SSF54570">
    <property type="entry name" value="Ribosomal protein S19"/>
    <property type="match status" value="1"/>
</dbReference>
<dbReference type="PROSITE" id="PS00323">
    <property type="entry name" value="RIBOSOMAL_S19"/>
    <property type="match status" value="1"/>
</dbReference>
<protein>
    <recommendedName>
        <fullName evidence="1">Small ribosomal subunit protein uS19</fullName>
    </recommendedName>
    <alternativeName>
        <fullName evidence="2">30S ribosomal protein S19</fullName>
    </alternativeName>
</protein>
<organism>
    <name type="scientific">Methylobacterium radiotolerans (strain ATCC 27329 / DSM 1819 / JCM 2831 / NBRC 15690 / NCIMB 10815 / 0-1)</name>
    <dbReference type="NCBI Taxonomy" id="426355"/>
    <lineage>
        <taxon>Bacteria</taxon>
        <taxon>Pseudomonadati</taxon>
        <taxon>Pseudomonadota</taxon>
        <taxon>Alphaproteobacteria</taxon>
        <taxon>Hyphomicrobiales</taxon>
        <taxon>Methylobacteriaceae</taxon>
        <taxon>Methylobacterium</taxon>
    </lineage>
</organism>